<reference key="1">
    <citation type="journal article" date="2002" name="Nature">
        <title>Sequence and analysis of rice chromosome 4.</title>
        <authorList>
            <person name="Feng Q."/>
            <person name="Zhang Y."/>
            <person name="Hao P."/>
            <person name="Wang S."/>
            <person name="Fu G."/>
            <person name="Huang Y."/>
            <person name="Li Y."/>
            <person name="Zhu J."/>
            <person name="Liu Y."/>
            <person name="Hu X."/>
            <person name="Jia P."/>
            <person name="Zhang Y."/>
            <person name="Zhao Q."/>
            <person name="Ying K."/>
            <person name="Yu S."/>
            <person name="Tang Y."/>
            <person name="Weng Q."/>
            <person name="Zhang L."/>
            <person name="Lu Y."/>
            <person name="Mu J."/>
            <person name="Lu Y."/>
            <person name="Zhang L.S."/>
            <person name="Yu Z."/>
            <person name="Fan D."/>
            <person name="Liu X."/>
            <person name="Lu T."/>
            <person name="Li C."/>
            <person name="Wu Y."/>
            <person name="Sun T."/>
            <person name="Lei H."/>
            <person name="Li T."/>
            <person name="Hu H."/>
            <person name="Guan J."/>
            <person name="Wu M."/>
            <person name="Zhang R."/>
            <person name="Zhou B."/>
            <person name="Chen Z."/>
            <person name="Chen L."/>
            <person name="Jin Z."/>
            <person name="Wang R."/>
            <person name="Yin H."/>
            <person name="Cai Z."/>
            <person name="Ren S."/>
            <person name="Lv G."/>
            <person name="Gu W."/>
            <person name="Zhu G."/>
            <person name="Tu Y."/>
            <person name="Jia J."/>
            <person name="Zhang Y."/>
            <person name="Chen J."/>
            <person name="Kang H."/>
            <person name="Chen X."/>
            <person name="Shao C."/>
            <person name="Sun Y."/>
            <person name="Hu Q."/>
            <person name="Zhang X."/>
            <person name="Zhang W."/>
            <person name="Wang L."/>
            <person name="Ding C."/>
            <person name="Sheng H."/>
            <person name="Gu J."/>
            <person name="Chen S."/>
            <person name="Ni L."/>
            <person name="Zhu F."/>
            <person name="Chen W."/>
            <person name="Lan L."/>
            <person name="Lai Y."/>
            <person name="Cheng Z."/>
            <person name="Gu M."/>
            <person name="Jiang J."/>
            <person name="Li J."/>
            <person name="Hong G."/>
            <person name="Xue Y."/>
            <person name="Han B."/>
        </authorList>
    </citation>
    <scope>NUCLEOTIDE SEQUENCE [LARGE SCALE GENOMIC DNA]</scope>
    <source>
        <strain>cv. Nipponbare</strain>
    </source>
</reference>
<reference key="2">
    <citation type="journal article" date="2005" name="Nature">
        <title>The map-based sequence of the rice genome.</title>
        <authorList>
            <consortium name="International rice genome sequencing project (IRGSP)"/>
        </authorList>
    </citation>
    <scope>NUCLEOTIDE SEQUENCE [LARGE SCALE GENOMIC DNA]</scope>
    <source>
        <strain>cv. Nipponbare</strain>
    </source>
</reference>
<reference key="3">
    <citation type="journal article" date="2008" name="Nucleic Acids Res.">
        <title>The rice annotation project database (RAP-DB): 2008 update.</title>
        <authorList>
            <consortium name="The rice annotation project (RAP)"/>
        </authorList>
    </citation>
    <scope>GENOME REANNOTATION</scope>
    <source>
        <strain>cv. Nipponbare</strain>
    </source>
</reference>
<reference key="4">
    <citation type="journal article" date="2013" name="Rice">
        <title>Improvement of the Oryza sativa Nipponbare reference genome using next generation sequence and optical map data.</title>
        <authorList>
            <person name="Kawahara Y."/>
            <person name="de la Bastide M."/>
            <person name="Hamilton J.P."/>
            <person name="Kanamori H."/>
            <person name="McCombie W.R."/>
            <person name="Ouyang S."/>
            <person name="Schwartz D.C."/>
            <person name="Tanaka T."/>
            <person name="Wu J."/>
            <person name="Zhou S."/>
            <person name="Childs K.L."/>
            <person name="Davidson R.M."/>
            <person name="Lin H."/>
            <person name="Quesada-Ocampo L."/>
            <person name="Vaillancourt B."/>
            <person name="Sakai H."/>
            <person name="Lee S.S."/>
            <person name="Kim J."/>
            <person name="Numa H."/>
            <person name="Itoh T."/>
            <person name="Buell C.R."/>
            <person name="Matsumoto T."/>
        </authorList>
    </citation>
    <scope>GENOME REANNOTATION</scope>
    <source>
        <strain>cv. Nipponbare</strain>
    </source>
</reference>
<reference key="5">
    <citation type="journal article" date="2005" name="PLoS Biol.">
        <title>The genomes of Oryza sativa: a history of duplications.</title>
        <authorList>
            <person name="Yu J."/>
            <person name="Wang J."/>
            <person name="Lin W."/>
            <person name="Li S."/>
            <person name="Li H."/>
            <person name="Zhou J."/>
            <person name="Ni P."/>
            <person name="Dong W."/>
            <person name="Hu S."/>
            <person name="Zeng C."/>
            <person name="Zhang J."/>
            <person name="Zhang Y."/>
            <person name="Li R."/>
            <person name="Xu Z."/>
            <person name="Li S."/>
            <person name="Li X."/>
            <person name="Zheng H."/>
            <person name="Cong L."/>
            <person name="Lin L."/>
            <person name="Yin J."/>
            <person name="Geng J."/>
            <person name="Li G."/>
            <person name="Shi J."/>
            <person name="Liu J."/>
            <person name="Lv H."/>
            <person name="Li J."/>
            <person name="Wang J."/>
            <person name="Deng Y."/>
            <person name="Ran L."/>
            <person name="Shi X."/>
            <person name="Wang X."/>
            <person name="Wu Q."/>
            <person name="Li C."/>
            <person name="Ren X."/>
            <person name="Wang J."/>
            <person name="Wang X."/>
            <person name="Li D."/>
            <person name="Liu D."/>
            <person name="Zhang X."/>
            <person name="Ji Z."/>
            <person name="Zhao W."/>
            <person name="Sun Y."/>
            <person name="Zhang Z."/>
            <person name="Bao J."/>
            <person name="Han Y."/>
            <person name="Dong L."/>
            <person name="Ji J."/>
            <person name="Chen P."/>
            <person name="Wu S."/>
            <person name="Liu J."/>
            <person name="Xiao Y."/>
            <person name="Bu D."/>
            <person name="Tan J."/>
            <person name="Yang L."/>
            <person name="Ye C."/>
            <person name="Zhang J."/>
            <person name="Xu J."/>
            <person name="Zhou Y."/>
            <person name="Yu Y."/>
            <person name="Zhang B."/>
            <person name="Zhuang S."/>
            <person name="Wei H."/>
            <person name="Liu B."/>
            <person name="Lei M."/>
            <person name="Yu H."/>
            <person name="Li Y."/>
            <person name="Xu H."/>
            <person name="Wei S."/>
            <person name="He X."/>
            <person name="Fang L."/>
            <person name="Zhang Z."/>
            <person name="Zhang Y."/>
            <person name="Huang X."/>
            <person name="Su Z."/>
            <person name="Tong W."/>
            <person name="Li J."/>
            <person name="Tong Z."/>
            <person name="Li S."/>
            <person name="Ye J."/>
            <person name="Wang L."/>
            <person name="Fang L."/>
            <person name="Lei T."/>
            <person name="Chen C.-S."/>
            <person name="Chen H.-C."/>
            <person name="Xu Z."/>
            <person name="Li H."/>
            <person name="Huang H."/>
            <person name="Zhang F."/>
            <person name="Xu H."/>
            <person name="Li N."/>
            <person name="Zhao C."/>
            <person name="Li S."/>
            <person name="Dong L."/>
            <person name="Huang Y."/>
            <person name="Li L."/>
            <person name="Xi Y."/>
            <person name="Qi Q."/>
            <person name="Li W."/>
            <person name="Zhang B."/>
            <person name="Hu W."/>
            <person name="Zhang Y."/>
            <person name="Tian X."/>
            <person name="Jiao Y."/>
            <person name="Liang X."/>
            <person name="Jin J."/>
            <person name="Gao L."/>
            <person name="Zheng W."/>
            <person name="Hao B."/>
            <person name="Liu S.-M."/>
            <person name="Wang W."/>
            <person name="Yuan L."/>
            <person name="Cao M."/>
            <person name="McDermott J."/>
            <person name="Samudrala R."/>
            <person name="Wang J."/>
            <person name="Wong G.K.-S."/>
            <person name="Yang H."/>
        </authorList>
    </citation>
    <scope>NUCLEOTIDE SEQUENCE [LARGE SCALE GENOMIC DNA]</scope>
    <source>
        <strain>cv. Nipponbare</strain>
    </source>
</reference>
<reference key="6">
    <citation type="journal article" date="2009" name="Plant Physiol.">
        <title>GRASSIUS: a platform for comparative regulatory genomics across the grasses.</title>
        <authorList>
            <person name="Yilmaz A."/>
            <person name="Nishiyama M.Y."/>
            <person name="Fuentes B.G."/>
            <person name="Souza G.M."/>
            <person name="Janies D."/>
            <person name="Gray J."/>
            <person name="Grotewold E."/>
        </authorList>
    </citation>
    <scope>GENE FAMILY</scope>
    <scope>NOMENCLATURE</scope>
    <source>
        <strain>cv. Nipponbare</strain>
    </source>
</reference>
<keyword id="KW-0238">DNA-binding</keyword>
<keyword id="KW-0539">Nucleus</keyword>
<keyword id="KW-1185">Reference proteome</keyword>
<keyword id="KW-0677">Repeat</keyword>
<keyword id="KW-0804">Transcription</keyword>
<keyword id="KW-0805">Transcription regulation</keyword>
<protein>
    <recommendedName>
        <fullName evidence="4">Probable transcription factor MYB58</fullName>
        <shortName evidence="3">OsMYB58</shortName>
    </recommendedName>
</protein>
<organism>
    <name type="scientific">Oryza sativa subsp. japonica</name>
    <name type="common">Rice</name>
    <dbReference type="NCBI Taxonomy" id="39947"/>
    <lineage>
        <taxon>Eukaryota</taxon>
        <taxon>Viridiplantae</taxon>
        <taxon>Streptophyta</taxon>
        <taxon>Embryophyta</taxon>
        <taxon>Tracheophyta</taxon>
        <taxon>Spermatophyta</taxon>
        <taxon>Magnoliopsida</taxon>
        <taxon>Liliopsida</taxon>
        <taxon>Poales</taxon>
        <taxon>Poaceae</taxon>
        <taxon>BOP clade</taxon>
        <taxon>Oryzoideae</taxon>
        <taxon>Oryzeae</taxon>
        <taxon>Oryzinae</taxon>
        <taxon>Oryza</taxon>
        <taxon>Oryza sativa</taxon>
    </lineage>
</organism>
<gene>
    <name evidence="3" type="primary">MYB58</name>
    <name evidence="5" type="ordered locus">Os04g0549500</name>
    <name evidence="4" type="ordered locus">LOC_Os04g46384</name>
    <name evidence="8" type="ORF">OsJ_15687</name>
    <name evidence="7" type="ORF">OSJNBa0065H10.16</name>
    <name evidence="6" type="ORF">OSJNBb0034G17.1</name>
</gene>
<name>MYB58_ORYSJ</name>
<feature type="chain" id="PRO_0000440262" description="Probable transcription factor MYB58">
    <location>
        <begin position="1"/>
        <end position="343"/>
    </location>
</feature>
<feature type="domain" description="HTH myb-type 1" evidence="1">
    <location>
        <begin position="26"/>
        <end position="78"/>
    </location>
</feature>
<feature type="domain" description="HTH myb-type 2" evidence="1">
    <location>
        <begin position="79"/>
        <end position="134"/>
    </location>
</feature>
<feature type="DNA-binding region" description="H-T-H motif" evidence="1">
    <location>
        <begin position="54"/>
        <end position="77"/>
    </location>
</feature>
<feature type="DNA-binding region" description="H-T-H motif" evidence="1">
    <location>
        <begin position="107"/>
        <end position="130"/>
    </location>
</feature>
<feature type="region of interest" description="Disordered" evidence="2">
    <location>
        <begin position="1"/>
        <end position="30"/>
    </location>
</feature>
<feature type="region of interest" description="Disordered" evidence="2">
    <location>
        <begin position="137"/>
        <end position="169"/>
    </location>
</feature>
<feature type="region of interest" description="Disordered" evidence="2">
    <location>
        <begin position="219"/>
        <end position="238"/>
    </location>
</feature>
<feature type="region of interest" description="Disordered" evidence="2">
    <location>
        <begin position="307"/>
        <end position="343"/>
    </location>
</feature>
<feature type="compositionally biased region" description="Gly residues" evidence="2">
    <location>
        <begin position="15"/>
        <end position="27"/>
    </location>
</feature>
<feature type="compositionally biased region" description="Polar residues" evidence="2">
    <location>
        <begin position="157"/>
        <end position="169"/>
    </location>
</feature>
<feature type="compositionally biased region" description="Pro residues" evidence="2">
    <location>
        <begin position="320"/>
        <end position="336"/>
    </location>
</feature>
<sequence length="343" mass="37111">MARAPGGVRRRSGRRGAGGGGAGGGGEALRKGPWMAEEDEVLLEHVRTHGPMDWSSIRSKGLLPRTGKSCRLRWVNKLRPNLKSGCKFTAEEERVVIELQAQFGNKWARIATYLQGRTDNDVKNFWSTRQKRLARLLRGPLPAARPNKHNSGKGKAPSSSSLDSQTATFHQSSASLDQASLEGNSLGWQCREAAPFMGYDQACSGFFAFEGPLPLQLLPPADGEASSSNAAQSAPPPLLFDQPPYPLINFPGWPERYVDVGHGFVDAGAMDGLAYQELLPMVQSVPMIMPFFGMECAHDAVKHGAFDDLPPNMFDDAVDQPPPPPPPPPPPSPSPSPSRDDVL</sequence>
<comment type="function">
    <text evidence="4">Probable transcription factor.</text>
</comment>
<comment type="subcellular location">
    <subcellularLocation>
        <location evidence="1">Nucleus</location>
    </subcellularLocation>
</comment>
<comment type="sequence caution" evidence="4">
    <conflict type="erroneous gene model prediction">
        <sequence resource="EMBL-CDS" id="CAD41609"/>
    </conflict>
    <text>The predicted gene has been split into 2 genes: Os04g0549500 and Os04g0549600.</text>
</comment>
<comment type="sequence caution" evidence="4">
    <conflict type="erroneous gene model prediction">
        <sequence resource="EMBL-CDS" id="CAI64493"/>
    </conflict>
</comment>
<proteinExistence type="inferred from homology"/>
<accession>Q0JB89</accession>
<accession>Q5CAG7</accession>
<accession>Q7X6U9</accession>
<dbReference type="EMBL" id="AL663000">
    <property type="protein sequence ID" value="CAD41609.2"/>
    <property type="status" value="ALT_SEQ"/>
    <property type="molecule type" value="Genomic_DNA"/>
</dbReference>
<dbReference type="EMBL" id="AL731613">
    <property type="protein sequence ID" value="CAI64493.1"/>
    <property type="status" value="ALT_SEQ"/>
    <property type="molecule type" value="Genomic_DNA"/>
</dbReference>
<dbReference type="EMBL" id="AP008210">
    <property type="protein sequence ID" value="BAF15398.1"/>
    <property type="molecule type" value="Genomic_DNA"/>
</dbReference>
<dbReference type="EMBL" id="AP014960">
    <property type="protein sequence ID" value="BAS90365.1"/>
    <property type="molecule type" value="Genomic_DNA"/>
</dbReference>
<dbReference type="EMBL" id="CM000141">
    <property type="protein sequence ID" value="EEE61448.1"/>
    <property type="molecule type" value="Genomic_DNA"/>
</dbReference>
<dbReference type="RefSeq" id="XP_015634881.1">
    <property type="nucleotide sequence ID" value="XM_015779395.1"/>
</dbReference>
<dbReference type="SMR" id="Q0JB89"/>
<dbReference type="STRING" id="39947.Q0JB89"/>
<dbReference type="PaxDb" id="39947-Q0JB89"/>
<dbReference type="KEGG" id="dosa:Os04g0549500"/>
<dbReference type="KEGG" id="osa:4336583"/>
<dbReference type="InParanoid" id="Q0JB89"/>
<dbReference type="OrthoDB" id="2143914at2759"/>
<dbReference type="Proteomes" id="UP000000763">
    <property type="component" value="Chromosome 4"/>
</dbReference>
<dbReference type="Proteomes" id="UP000007752">
    <property type="component" value="Chromosome 4"/>
</dbReference>
<dbReference type="Proteomes" id="UP000059680">
    <property type="component" value="Chromosome 4"/>
</dbReference>
<dbReference type="GO" id="GO:0005634">
    <property type="term" value="C:nucleus"/>
    <property type="evidence" value="ECO:0007669"/>
    <property type="project" value="UniProtKB-SubCell"/>
</dbReference>
<dbReference type="GO" id="GO:0003677">
    <property type="term" value="F:DNA binding"/>
    <property type="evidence" value="ECO:0007669"/>
    <property type="project" value="UniProtKB-KW"/>
</dbReference>
<dbReference type="CDD" id="cd00167">
    <property type="entry name" value="SANT"/>
    <property type="match status" value="2"/>
</dbReference>
<dbReference type="FunFam" id="1.10.10.60:FF:000060">
    <property type="entry name" value="MYB transcription factor"/>
    <property type="match status" value="1"/>
</dbReference>
<dbReference type="FunFam" id="1.10.10.60:FF:000351">
    <property type="entry name" value="Transcription factor GAMYB"/>
    <property type="match status" value="1"/>
</dbReference>
<dbReference type="Gene3D" id="1.10.10.60">
    <property type="entry name" value="Homeodomain-like"/>
    <property type="match status" value="2"/>
</dbReference>
<dbReference type="InterPro" id="IPR009057">
    <property type="entry name" value="Homeodomain-like_sf"/>
</dbReference>
<dbReference type="InterPro" id="IPR017930">
    <property type="entry name" value="Myb_dom"/>
</dbReference>
<dbReference type="InterPro" id="IPR053106">
    <property type="entry name" value="Plant_Male-Germline_Reg_TFs"/>
</dbReference>
<dbReference type="InterPro" id="IPR001005">
    <property type="entry name" value="SANT/Myb"/>
</dbReference>
<dbReference type="PANTHER" id="PTHR47996">
    <property type="entry name" value="TRANSCRIPTION FACTOR DUO1"/>
    <property type="match status" value="1"/>
</dbReference>
<dbReference type="PANTHER" id="PTHR47996:SF5">
    <property type="entry name" value="TRANSCRIPTION FACTOR MYB58-RELATED"/>
    <property type="match status" value="1"/>
</dbReference>
<dbReference type="Pfam" id="PF00249">
    <property type="entry name" value="Myb_DNA-binding"/>
    <property type="match status" value="2"/>
</dbReference>
<dbReference type="SMART" id="SM00717">
    <property type="entry name" value="SANT"/>
    <property type="match status" value="2"/>
</dbReference>
<dbReference type="SUPFAM" id="SSF46689">
    <property type="entry name" value="Homeodomain-like"/>
    <property type="match status" value="1"/>
</dbReference>
<dbReference type="PROSITE" id="PS51294">
    <property type="entry name" value="HTH_MYB"/>
    <property type="match status" value="2"/>
</dbReference>
<evidence type="ECO:0000255" key="1">
    <source>
        <dbReference type="PROSITE-ProRule" id="PRU00625"/>
    </source>
</evidence>
<evidence type="ECO:0000256" key="2">
    <source>
        <dbReference type="SAM" id="MobiDB-lite"/>
    </source>
</evidence>
<evidence type="ECO:0000303" key="3">
    <source>
    </source>
</evidence>
<evidence type="ECO:0000305" key="4"/>
<evidence type="ECO:0000312" key="5">
    <source>
        <dbReference type="EMBL" id="BAF15398.1"/>
    </source>
</evidence>
<evidence type="ECO:0000312" key="6">
    <source>
        <dbReference type="EMBL" id="CAD41609.2"/>
    </source>
</evidence>
<evidence type="ECO:0000312" key="7">
    <source>
        <dbReference type="EMBL" id="CAI64493.1"/>
    </source>
</evidence>
<evidence type="ECO:0000312" key="8">
    <source>
        <dbReference type="EMBL" id="EEE61448.1"/>
    </source>
</evidence>